<comment type="function">
    <molecule>[Val1,Thr6]-bradykinin</molecule>
    <text evidence="4">Induces contraction of rat ileum smooth muscle (EC(50)=2.73 uM) but has no activity towards smooth muscle from tail artery, urinary bladder or uterus up to concentrations of 100 uM. Binds to both bradykinin receptor B1 (BDKRB1) and B2 (BDKRB2); the effect via BDKRB1 is stronger.</text>
</comment>
<comment type="function">
    <text evidence="3 4">[Val1,Hyp2,Thr6]-bradykinin-Gln,Ser: Induces contraction of rat ileum smooth muscle (EC(50)=710 nM) but has no activity towards smooth muscle from tail artery, urinary bladder or uterus up to concentrations of 100 uM. Binds to both bradykinin receptor B1 (BDKRB1) and B2 (BDKRB2); the effect via BDKRB1 is stronger (PubMed:24394432). Induces contraction of guinea pig ileum smooth muscle (PubMed:16797783).</text>
</comment>
<comment type="subcellular location">
    <subcellularLocation>
        <location evidence="3 4">Secreted</location>
    </subcellularLocation>
</comment>
<comment type="tissue specificity">
    <text evidence="3 4">Expressed by the skin glands.</text>
</comment>
<comment type="mass spectrometry" mass="1231.95" method="MALDI" evidence="4">
    <molecule>[Val1,Thr6]-bradykinyl-Gln,Ser</molecule>
    <text>[Val1,Thr6]-bradykinyl-Gln,Ser.</text>
</comment>
<comment type="mass spectrometry" mass="1247.85" method="MALDI" evidence="4">
    <molecule>[Val1,Thr6]-bradykinyl-Gln,Ser</molecule>
    <text>[Val1,Hyp2,Thr6]-bradykinyl-Gln,Ser.</text>
</comment>
<comment type="mass spectrometry" mass="1016.5" method="MALDI" evidence="4">
    <molecule>[Val1,Thr6]-bradykinin</molecule>
    <text>[Val1,Thr6]-bradykinin.</text>
</comment>
<comment type="mass spectrometry" mass="1032.65" method="MALDI" evidence="4">
    <molecule>[Val1,Thr6]-bradykinin</molecule>
    <text>[Val1,Hyp2,Thr6]-bradykinin.</text>
</comment>
<comment type="mass spectrometry" mass="1232.66" error="0.1" method="MALDI" evidence="3">
    <molecule>[Val1,Thr6]-bradykinyl-Gln,Ser</molecule>
    <text>[Val1,Thr6]-bradykinyl-Gln,Ser.</text>
</comment>
<comment type="mass spectrometry" mass="1248.69" error="0.1" method="MALDI" evidence="3">
    <molecule>[Val1,Thr6]-bradykinyl-Gln,Ser</molecule>
    <text>[Val1,Hyp2,Thr6]-bradykinyl-Gln,Ser.</text>
</comment>
<comment type="mass spectrometry" mass="1017.54" error="0.1" method="MALDI" evidence="3">
    <molecule>[Val1,Thr6]-bradykinin</molecule>
    <text>[Val1,Thr6]-bradykinin.</text>
</comment>
<comment type="mass spectrometry" mass="1033.54" error="0.1" method="MALDI" evidence="3">
    <molecule>[Val1,Thr6]-bradykinin</molecule>
    <text>[Val1,Hyp2,Thr6]-bradykinin.</text>
</comment>
<comment type="similarity">
    <text evidence="6">Belongs to the frog skin active peptide (FSAP) family. Bradykinin-related peptide subfamily.</text>
</comment>
<keyword id="KW-0878">Amphibian defense peptide</keyword>
<keyword id="KW-0903">Direct protein sequencing</keyword>
<keyword id="KW-1213">G-protein coupled receptor impairing toxin</keyword>
<keyword id="KW-0379">Hydroxylation</keyword>
<keyword id="KW-0964">Secreted</keyword>
<keyword id="KW-0732">Signal</keyword>
<keyword id="KW-0800">Toxin</keyword>
<name>BRK4_PITHY</name>
<sequence length="61" mass="7180">MSILKKSLFLVLFLGLVSFSICEEEKREAEEEENEDEIEEQSEEKKRFEPVPPGFTPFRQS</sequence>
<proteinExistence type="evidence at protein level"/>
<organism>
    <name type="scientific">Pithecopus hypochondrialis</name>
    <name type="common">Orange-legged leaf frog</name>
    <name type="synonym">Phyllomedusa hypochondrialis</name>
    <dbReference type="NCBI Taxonomy" id="317381"/>
    <lineage>
        <taxon>Eukaryota</taxon>
        <taxon>Metazoa</taxon>
        <taxon>Chordata</taxon>
        <taxon>Craniata</taxon>
        <taxon>Vertebrata</taxon>
        <taxon>Euteleostomi</taxon>
        <taxon>Amphibia</taxon>
        <taxon>Batrachia</taxon>
        <taxon>Anura</taxon>
        <taxon>Neobatrachia</taxon>
        <taxon>Hyloidea</taxon>
        <taxon>Hylidae</taxon>
        <taxon>Phyllomedusinae</taxon>
        <taxon>Pithecopus</taxon>
    </lineage>
</organism>
<protein>
    <recommendedName>
        <fullName evidence="5">[Val1,Thr6]-bradykinyl-Gln,Ser</fullName>
    </recommendedName>
    <alternativeName>
        <fullName evidence="5">Bradykinin-related peptide VS-11</fullName>
    </alternativeName>
    <component>
        <recommendedName>
            <fullName evidence="5">[Val1,Thr6]-bradykinin</fullName>
        </recommendedName>
    </component>
</protein>
<evidence type="ECO:0000255" key="1"/>
<evidence type="ECO:0000256" key="2">
    <source>
        <dbReference type="SAM" id="MobiDB-lite"/>
    </source>
</evidence>
<evidence type="ECO:0000269" key="3">
    <source>
    </source>
</evidence>
<evidence type="ECO:0000269" key="4">
    <source>
    </source>
</evidence>
<evidence type="ECO:0000303" key="5">
    <source>
    </source>
</evidence>
<evidence type="ECO:0000305" key="6"/>
<evidence type="ECO:0000305" key="7">
    <source>
    </source>
</evidence>
<evidence type="ECO:0000305" key="8">
    <source>
    </source>
</evidence>
<evidence type="ECO:0000312" key="9">
    <source>
        <dbReference type="EMBL" id="CCJ67652.1"/>
    </source>
</evidence>
<dbReference type="EMBL" id="HE967331">
    <property type="protein sequence ID" value="CCJ67652.1"/>
    <property type="molecule type" value="mRNA"/>
</dbReference>
<dbReference type="GO" id="GO:0005576">
    <property type="term" value="C:extracellular region"/>
    <property type="evidence" value="ECO:0007669"/>
    <property type="project" value="UniProtKB-SubCell"/>
</dbReference>
<dbReference type="GO" id="GO:0090729">
    <property type="term" value="F:toxin activity"/>
    <property type="evidence" value="ECO:0007669"/>
    <property type="project" value="UniProtKB-KW"/>
</dbReference>
<dbReference type="GO" id="GO:0006952">
    <property type="term" value="P:defense response"/>
    <property type="evidence" value="ECO:0007669"/>
    <property type="project" value="UniProtKB-KW"/>
</dbReference>
<dbReference type="InterPro" id="IPR004275">
    <property type="entry name" value="Frog_antimicrobial_propeptide"/>
</dbReference>
<dbReference type="Pfam" id="PF03032">
    <property type="entry name" value="FSAP_sig_propep"/>
    <property type="match status" value="1"/>
</dbReference>
<accession>P84899</accession>
<accession>L0PHN1</accession>
<accession>P84894</accession>
<reference key="1">
    <citation type="journal article" date="2014" name="Peptides">
        <title>Bradykinin-related peptides (BRPs) from skin secretions of three genera of phyllomedusine leaf frogs and their comparative pharmacological effects on mammalian smooth muscles.</title>
        <authorList>
            <person name="Jiang Y."/>
            <person name="Xi X."/>
            <person name="Ge L."/>
            <person name="Yang N."/>
            <person name="Hou X."/>
            <person name="Ma J."/>
            <person name="Ma C."/>
            <person name="Wu Y."/>
            <person name="Guo X."/>
            <person name="Li R."/>
            <person name="Zhou M."/>
            <person name="Wang L."/>
            <person name="Chen T."/>
            <person name="Shaw C."/>
        </authorList>
    </citation>
    <scope>NUCLEOTIDE SEQUENCE [MRNA]</scope>
    <scope>PROTEIN SEQUENCE OF 51-61</scope>
    <scope>FUNCTION</scope>
    <scope>SUBCELLULAR LOCATION</scope>
    <scope>TISSUE SPECIFICITY</scope>
    <scope>MASS SPECTROMETRY</scope>
    <scope>HYDROXYLATION AT PRO-52</scope>
    <scope>IDENTIFICATION BY MASS SPECTROMETRY</scope>
    <source>
        <tissue evidence="9">Skin</tissue>
        <tissue evidence="5">Skin secretion</tissue>
    </source>
</reference>
<reference evidence="6" key="2">
    <citation type="journal article" date="2006" name="Peptides">
        <title>Bradykinin-related peptides from Phyllomedusa hypochondrialis.</title>
        <authorList>
            <person name="Brand G.D."/>
            <person name="Krause F.C."/>
            <person name="Silva L.P."/>
            <person name="Leite J.R.S.A."/>
            <person name="Melo J.A.T."/>
            <person name="Prates M.V."/>
            <person name="Pesquero J.B."/>
            <person name="Santos E.L."/>
            <person name="Nakaie C.R."/>
            <person name="Costa-Neto C.M."/>
            <person name="Bloch C. Jr."/>
        </authorList>
    </citation>
    <scope>PROTEIN SEQUENCE OF 51-61</scope>
    <scope>FUNCTION</scope>
    <scope>SUBCELLULAR LOCATION</scope>
    <scope>TISSUE SPECIFICITY</scope>
    <scope>MASS SPECTROMETRY</scope>
    <scope>HYDROXYLATION AT PRO-52</scope>
    <scope>IDENTIFICATION BY MASS SPECTROMETRY</scope>
    <source>
        <tissue evidence="3">Skin secretion</tissue>
    </source>
</reference>
<feature type="signal peptide" evidence="1">
    <location>
        <begin position="1"/>
        <end position="22"/>
    </location>
</feature>
<feature type="propeptide" id="PRO_0000438929" evidence="7 8">
    <location>
        <begin position="23"/>
        <end position="50"/>
    </location>
</feature>
<feature type="peptide" id="PRO_0000438930" description="[Val1,Thr6]-bradykinyl-Gln,Ser" evidence="3 4">
    <location>
        <begin position="51"/>
        <end position="61"/>
    </location>
</feature>
<feature type="peptide" id="PRO_0000438931" description="[Val1,Thr6]-bradykinin" evidence="3 4">
    <location>
        <begin position="51"/>
        <end position="59"/>
    </location>
</feature>
<feature type="region of interest" description="Disordered" evidence="2">
    <location>
        <begin position="25"/>
        <end position="61"/>
    </location>
</feature>
<feature type="compositionally biased region" description="Acidic residues" evidence="2">
    <location>
        <begin position="30"/>
        <end position="42"/>
    </location>
</feature>
<feature type="modified residue" description="4-hydroxyproline; in form [Val1,Hyp2,Thr6]-Bradykinyl-Gln,Ser and [Val1,Hyp2,Thr6]-Bradykinin" evidence="3 4">
    <location>
        <position position="52"/>
    </location>
</feature>